<dbReference type="EMBL" id="AB179486">
    <property type="protein sequence ID" value="BAE02537.1"/>
    <property type="molecule type" value="mRNA"/>
</dbReference>
<dbReference type="RefSeq" id="NP_001306377.1">
    <property type="nucleotide sequence ID" value="NM_001319448.1"/>
</dbReference>
<dbReference type="RefSeq" id="XP_005580155.4">
    <property type="nucleotide sequence ID" value="XM_005580098.4"/>
</dbReference>
<dbReference type="RefSeq" id="XP_015291405.1">
    <property type="nucleotide sequence ID" value="XM_015435919.1"/>
</dbReference>
<dbReference type="RefSeq" id="XP_045226720.2">
    <property type="nucleotide sequence ID" value="XM_045370785.2"/>
</dbReference>
<dbReference type="RefSeq" id="XP_045226721.2">
    <property type="nucleotide sequence ID" value="XM_045370786.2"/>
</dbReference>
<dbReference type="RefSeq" id="XP_045226722.2">
    <property type="nucleotide sequence ID" value="XM_045370787.2"/>
</dbReference>
<dbReference type="RefSeq" id="XP_065385274.1">
    <property type="nucleotide sequence ID" value="XM_065529202.1"/>
</dbReference>
<dbReference type="STRING" id="9541.ENSMFAP00000010821"/>
<dbReference type="Ensembl" id="ENSMFAT00000078129.1">
    <property type="protein sequence ID" value="ENSMFAP00000054713.1"/>
    <property type="gene ID" value="ENSMFAG00000010478.2"/>
</dbReference>
<dbReference type="Ensembl" id="ENSMFAT00000091798.1">
    <property type="protein sequence ID" value="ENSMFAP00000052930.1"/>
    <property type="gene ID" value="ENSMFAG00000010478.2"/>
</dbReference>
<dbReference type="GeneID" id="101925278"/>
<dbReference type="CTD" id="219844"/>
<dbReference type="VEuPathDB" id="HostDB:ENSMFAG00000010478"/>
<dbReference type="eggNOG" id="ENOG502QVD7">
    <property type="taxonomic scope" value="Eukaryota"/>
</dbReference>
<dbReference type="GeneTree" id="ENSGT00390000008848"/>
<dbReference type="OMA" id="ICYLQRE"/>
<dbReference type="Proteomes" id="UP000233100">
    <property type="component" value="Chromosome 14"/>
</dbReference>
<dbReference type="Bgee" id="ENSMFAG00000010478">
    <property type="expression patterns" value="Expressed in thymus and 13 other cell types or tissues"/>
</dbReference>
<dbReference type="GO" id="GO:0005814">
    <property type="term" value="C:centriole"/>
    <property type="evidence" value="ECO:0007669"/>
    <property type="project" value="UniProtKB-SubCell"/>
</dbReference>
<dbReference type="GO" id="GO:0005929">
    <property type="term" value="C:cilium"/>
    <property type="evidence" value="ECO:0000250"/>
    <property type="project" value="UniProtKB"/>
</dbReference>
<dbReference type="GO" id="GO:0005737">
    <property type="term" value="C:cytoplasm"/>
    <property type="evidence" value="ECO:0007669"/>
    <property type="project" value="UniProtKB-SubCell"/>
</dbReference>
<dbReference type="GO" id="GO:0097730">
    <property type="term" value="C:non-motile cilium"/>
    <property type="evidence" value="ECO:0007669"/>
    <property type="project" value="TreeGrafter"/>
</dbReference>
<dbReference type="GO" id="GO:0060271">
    <property type="term" value="P:cilium assembly"/>
    <property type="evidence" value="ECO:0000250"/>
    <property type="project" value="UniProtKB"/>
</dbReference>
<dbReference type="InterPro" id="IPR052319">
    <property type="entry name" value="Centriolar_ciliogenesis_assoc"/>
</dbReference>
<dbReference type="InterPro" id="IPR026227">
    <property type="entry name" value="HYLS1"/>
</dbReference>
<dbReference type="InterPro" id="IPR027918">
    <property type="entry name" value="HYLS1_C_dom"/>
</dbReference>
<dbReference type="PANTHER" id="PTHR34174:SF1">
    <property type="entry name" value="CENTRIOLAR AND CILIOGENESIS-ASSOCIATED PROTEIN HYLS1"/>
    <property type="match status" value="1"/>
</dbReference>
<dbReference type="PANTHER" id="PTHR34174">
    <property type="entry name" value="HYDROLETHALUS SYNDROME PROTEIN 1"/>
    <property type="match status" value="1"/>
</dbReference>
<dbReference type="Pfam" id="PF15311">
    <property type="entry name" value="HYLS1_C"/>
    <property type="match status" value="1"/>
</dbReference>
<dbReference type="PRINTS" id="PR02098">
    <property type="entry name" value="HYLETHALUSS1"/>
</dbReference>
<reference key="1">
    <citation type="submission" date="2005-06" db="EMBL/GenBank/DDBJ databases">
        <title>DNA sequences of macaque genes expressed in brain or testis and its evolutionary implications.</title>
        <authorList>
            <consortium name="International consortium for macaque cDNA sequencing and analysis"/>
        </authorList>
    </citation>
    <scope>NUCLEOTIDE SEQUENCE [LARGE SCALE MRNA]</scope>
    <source>
        <tissue>Testis</tissue>
    </source>
</reference>
<protein>
    <recommendedName>
        <fullName evidence="4">Centriolar and ciliogenesis-associated protein HYSL1</fullName>
    </recommendedName>
    <alternativeName>
        <fullName>Hydrolethalus syndrome protein 1 homolog</fullName>
    </alternativeName>
</protein>
<organism>
    <name type="scientific">Macaca fascicularis</name>
    <name type="common">Crab-eating macaque</name>
    <name type="synonym">Cynomolgus monkey</name>
    <dbReference type="NCBI Taxonomy" id="9541"/>
    <lineage>
        <taxon>Eukaryota</taxon>
        <taxon>Metazoa</taxon>
        <taxon>Chordata</taxon>
        <taxon>Craniata</taxon>
        <taxon>Vertebrata</taxon>
        <taxon>Euteleostomi</taxon>
        <taxon>Mammalia</taxon>
        <taxon>Eutheria</taxon>
        <taxon>Euarchontoglires</taxon>
        <taxon>Primates</taxon>
        <taxon>Haplorrhini</taxon>
        <taxon>Catarrhini</taxon>
        <taxon>Cercopithecidae</taxon>
        <taxon>Cercopithecinae</taxon>
        <taxon>Macaca</taxon>
    </lineage>
</organism>
<sequence>MEELLPDRQVWANMDPEERMLAAATAFTHICAGQGEGDVRREAQSIQYDPYSKASIAPGKRPTLPVQLQYPHVESNVTSETVSEASQRLRKPVMKRKVLRRKPDGEVLVTDESIISESESGTENDQGLWDLRQRLMNVQFQEDKESSFDISQKFNPPHEYQGISQDQLICSLQREGMGSPAYEQDLIVASRPKSFILPKLDQLSRNRGKTDRVARYFEYKRDWDSIRLPGEDHRKELRWGVREQMLCRAEPQSKPQHIYVPNNYLVPTEKKRSALRWGVRCDLANGVIPRKLPFPLSPS</sequence>
<gene>
    <name type="primary">HYLS1</name>
    <name type="ORF">QtsA-21349</name>
</gene>
<proteinExistence type="evidence at transcript level"/>
<name>HYLS1_MACFA</name>
<evidence type="ECO:0000250" key="1">
    <source>
        <dbReference type="UniProtKB" id="A0A1L8ER70"/>
    </source>
</evidence>
<evidence type="ECO:0000250" key="2">
    <source>
        <dbReference type="UniProtKB" id="Q95X94"/>
    </source>
</evidence>
<evidence type="ECO:0000250" key="3">
    <source>
        <dbReference type="UniProtKB" id="Q96M11"/>
    </source>
</evidence>
<evidence type="ECO:0000305" key="4"/>
<comment type="function">
    <text evidence="1 2">Plays a role in ciliogenesis.</text>
</comment>
<comment type="subcellular location">
    <subcellularLocation>
        <location evidence="3">Cytoplasm</location>
    </subcellularLocation>
    <subcellularLocation>
        <location evidence="1 2">Cell projection</location>
        <location evidence="1 2">Cilium</location>
    </subcellularLocation>
    <subcellularLocation>
        <location evidence="1 2">Cytoplasm</location>
        <location evidence="1 2">Cytoskeleton</location>
        <location evidence="1 2">Microtubule organizing center</location>
        <location evidence="1 2">Centrosome</location>
        <location evidence="1 2">Centriole</location>
    </subcellularLocation>
</comment>
<comment type="similarity">
    <text evidence="4">Belongs to the HYLS1 family.</text>
</comment>
<accession>Q4R2Y2</accession>
<feature type="chain" id="PRO_0000284926" description="Centriolar and ciliogenesis-associated protein HYSL1">
    <location>
        <begin position="1"/>
        <end position="299"/>
    </location>
</feature>
<feature type="modified residue" description="Phosphoserine" evidence="3">
    <location>
        <position position="179"/>
    </location>
</feature>
<keyword id="KW-0966">Cell projection</keyword>
<keyword id="KW-0970">Cilium biogenesis/degradation</keyword>
<keyword id="KW-0963">Cytoplasm</keyword>
<keyword id="KW-0206">Cytoskeleton</keyword>
<keyword id="KW-0597">Phosphoprotein</keyword>
<keyword id="KW-1185">Reference proteome</keyword>